<sequence length="360" mass="40602">MSRVYNFSAGPAAIPEEVLFTVRDELLDWHGIGMSIAEVSHRGEEFIGVAEEAERDLRELLAVPESYHILFLQGGSRLQFAMVPMNLLANHKKAVYIDSGVWSNLAIREAKNYCDPHLATNAKELNYTGIPDQATWDMPNEAAYFYYVDNETVNGIEFPFIPDTDLTLVCDMSSNLLSRPFDVSRYGLIFACAQKNMGLAGLTIVIVHDDLLKRSPLPTTPSYLQYALHAKERSFINTPPTFAWYLAGLIFKWVKNQGGVAVLAERNQRKAAKLYKFIDKSNFFDNPINPTYRSRMNVIFRLADEILNSLFLKEATENGLANLKGHRLLGGMRASIYNAMTEEGVDALINFMGQFEKRHG</sequence>
<accession>A9KCT6</accession>
<name>SERC_COXBN</name>
<reference key="1">
    <citation type="journal article" date="2009" name="Infect. Immun.">
        <title>Comparative genomics reveal extensive transposon-mediated genomic plasticity and diversity among potential effector proteins within the genus Coxiella.</title>
        <authorList>
            <person name="Beare P.A."/>
            <person name="Unsworth N."/>
            <person name="Andoh M."/>
            <person name="Voth D.E."/>
            <person name="Omsland A."/>
            <person name="Gilk S.D."/>
            <person name="Williams K.P."/>
            <person name="Sobral B.W."/>
            <person name="Kupko J.J. III"/>
            <person name="Porcella S.F."/>
            <person name="Samuel J.E."/>
            <person name="Heinzen R.A."/>
        </authorList>
    </citation>
    <scope>NUCLEOTIDE SEQUENCE [LARGE SCALE GENOMIC DNA]</scope>
    <source>
        <strain>Dugway 5J108-111</strain>
    </source>
</reference>
<protein>
    <recommendedName>
        <fullName evidence="1">Phosphoserine aminotransferase</fullName>
        <ecNumber evidence="1">2.6.1.52</ecNumber>
    </recommendedName>
    <alternativeName>
        <fullName evidence="1">Phosphohydroxythreonine aminotransferase</fullName>
        <shortName evidence="1">PSAT</shortName>
    </alternativeName>
</protein>
<gene>
    <name evidence="1" type="primary">serC</name>
    <name type="ordered locus">CBUD_1538</name>
</gene>
<feature type="chain" id="PRO_1000076904" description="Phosphoserine aminotransferase">
    <location>
        <begin position="1"/>
        <end position="360"/>
    </location>
</feature>
<feature type="binding site" evidence="1">
    <location>
        <position position="42"/>
    </location>
    <ligand>
        <name>L-glutamate</name>
        <dbReference type="ChEBI" id="CHEBI:29985"/>
    </ligand>
</feature>
<feature type="binding site" evidence="1">
    <location>
        <position position="102"/>
    </location>
    <ligand>
        <name>pyridoxal 5'-phosphate</name>
        <dbReference type="ChEBI" id="CHEBI:597326"/>
    </ligand>
</feature>
<feature type="binding site" evidence="1">
    <location>
        <position position="152"/>
    </location>
    <ligand>
        <name>pyridoxal 5'-phosphate</name>
        <dbReference type="ChEBI" id="CHEBI:597326"/>
    </ligand>
</feature>
<feature type="binding site" evidence="1">
    <location>
        <position position="171"/>
    </location>
    <ligand>
        <name>pyridoxal 5'-phosphate</name>
        <dbReference type="ChEBI" id="CHEBI:597326"/>
    </ligand>
</feature>
<feature type="binding site" evidence="1">
    <location>
        <position position="194"/>
    </location>
    <ligand>
        <name>pyridoxal 5'-phosphate</name>
        <dbReference type="ChEBI" id="CHEBI:597326"/>
    </ligand>
</feature>
<feature type="binding site" evidence="1">
    <location>
        <begin position="237"/>
        <end position="238"/>
    </location>
    <ligand>
        <name>pyridoxal 5'-phosphate</name>
        <dbReference type="ChEBI" id="CHEBI:597326"/>
    </ligand>
</feature>
<feature type="modified residue" description="N6-(pyridoxal phosphate)lysine" evidence="1">
    <location>
        <position position="195"/>
    </location>
</feature>
<organism>
    <name type="scientific">Coxiella burnetii (strain Dugway 5J108-111)</name>
    <dbReference type="NCBI Taxonomy" id="434922"/>
    <lineage>
        <taxon>Bacteria</taxon>
        <taxon>Pseudomonadati</taxon>
        <taxon>Pseudomonadota</taxon>
        <taxon>Gammaproteobacteria</taxon>
        <taxon>Legionellales</taxon>
        <taxon>Coxiellaceae</taxon>
        <taxon>Coxiella</taxon>
    </lineage>
</organism>
<dbReference type="EC" id="2.6.1.52" evidence="1"/>
<dbReference type="EMBL" id="CP000733">
    <property type="protein sequence ID" value="ABS78130.1"/>
    <property type="molecule type" value="Genomic_DNA"/>
</dbReference>
<dbReference type="RefSeq" id="WP_011997138.1">
    <property type="nucleotide sequence ID" value="NC_009727.1"/>
</dbReference>
<dbReference type="SMR" id="A9KCT6"/>
<dbReference type="KEGG" id="cbd:CBUD_1538"/>
<dbReference type="HOGENOM" id="CLU_034866_0_2_6"/>
<dbReference type="UniPathway" id="UPA00135">
    <property type="reaction ID" value="UER00197"/>
</dbReference>
<dbReference type="UniPathway" id="UPA00244">
    <property type="reaction ID" value="UER00311"/>
</dbReference>
<dbReference type="Proteomes" id="UP000008555">
    <property type="component" value="Chromosome"/>
</dbReference>
<dbReference type="GO" id="GO:0005737">
    <property type="term" value="C:cytoplasm"/>
    <property type="evidence" value="ECO:0007669"/>
    <property type="project" value="UniProtKB-SubCell"/>
</dbReference>
<dbReference type="GO" id="GO:0004648">
    <property type="term" value="F:O-phospho-L-serine:2-oxoglutarate aminotransferase activity"/>
    <property type="evidence" value="ECO:0007669"/>
    <property type="project" value="UniProtKB-UniRule"/>
</dbReference>
<dbReference type="GO" id="GO:0030170">
    <property type="term" value="F:pyridoxal phosphate binding"/>
    <property type="evidence" value="ECO:0007669"/>
    <property type="project" value="UniProtKB-UniRule"/>
</dbReference>
<dbReference type="GO" id="GO:0006564">
    <property type="term" value="P:L-serine biosynthetic process"/>
    <property type="evidence" value="ECO:0007669"/>
    <property type="project" value="UniProtKB-UniRule"/>
</dbReference>
<dbReference type="GO" id="GO:0008615">
    <property type="term" value="P:pyridoxine biosynthetic process"/>
    <property type="evidence" value="ECO:0007669"/>
    <property type="project" value="UniProtKB-UniRule"/>
</dbReference>
<dbReference type="FunFam" id="3.40.640.10:FF:000010">
    <property type="entry name" value="Phosphoserine aminotransferase"/>
    <property type="match status" value="1"/>
</dbReference>
<dbReference type="FunFam" id="3.90.1150.10:FF:000006">
    <property type="entry name" value="Phosphoserine aminotransferase"/>
    <property type="match status" value="1"/>
</dbReference>
<dbReference type="Gene3D" id="3.90.1150.10">
    <property type="entry name" value="Aspartate Aminotransferase, domain 1"/>
    <property type="match status" value="1"/>
</dbReference>
<dbReference type="Gene3D" id="3.40.640.10">
    <property type="entry name" value="Type I PLP-dependent aspartate aminotransferase-like (Major domain)"/>
    <property type="match status" value="1"/>
</dbReference>
<dbReference type="HAMAP" id="MF_00160">
    <property type="entry name" value="SerC_aminotrans_5"/>
    <property type="match status" value="1"/>
</dbReference>
<dbReference type="InterPro" id="IPR000192">
    <property type="entry name" value="Aminotrans_V_dom"/>
</dbReference>
<dbReference type="InterPro" id="IPR020578">
    <property type="entry name" value="Aminotrans_V_PyrdxlP_BS"/>
</dbReference>
<dbReference type="InterPro" id="IPR022278">
    <property type="entry name" value="Pser_aminoTfrase"/>
</dbReference>
<dbReference type="InterPro" id="IPR015424">
    <property type="entry name" value="PyrdxlP-dep_Trfase"/>
</dbReference>
<dbReference type="InterPro" id="IPR015421">
    <property type="entry name" value="PyrdxlP-dep_Trfase_major"/>
</dbReference>
<dbReference type="InterPro" id="IPR015422">
    <property type="entry name" value="PyrdxlP-dep_Trfase_small"/>
</dbReference>
<dbReference type="NCBIfam" id="NF003764">
    <property type="entry name" value="PRK05355.1"/>
    <property type="match status" value="1"/>
</dbReference>
<dbReference type="NCBIfam" id="TIGR01364">
    <property type="entry name" value="serC_1"/>
    <property type="match status" value="1"/>
</dbReference>
<dbReference type="PANTHER" id="PTHR43247">
    <property type="entry name" value="PHOSPHOSERINE AMINOTRANSFERASE"/>
    <property type="match status" value="1"/>
</dbReference>
<dbReference type="PANTHER" id="PTHR43247:SF1">
    <property type="entry name" value="PHOSPHOSERINE AMINOTRANSFERASE"/>
    <property type="match status" value="1"/>
</dbReference>
<dbReference type="Pfam" id="PF00266">
    <property type="entry name" value="Aminotran_5"/>
    <property type="match status" value="1"/>
</dbReference>
<dbReference type="PIRSF" id="PIRSF000525">
    <property type="entry name" value="SerC"/>
    <property type="match status" value="1"/>
</dbReference>
<dbReference type="SUPFAM" id="SSF53383">
    <property type="entry name" value="PLP-dependent transferases"/>
    <property type="match status" value="1"/>
</dbReference>
<dbReference type="PROSITE" id="PS00595">
    <property type="entry name" value="AA_TRANSFER_CLASS_5"/>
    <property type="match status" value="1"/>
</dbReference>
<comment type="function">
    <text evidence="1">Catalyzes the reversible conversion of 3-phosphohydroxypyruvate to phosphoserine and of 3-hydroxy-2-oxo-4-phosphonooxybutanoate to phosphohydroxythreonine.</text>
</comment>
<comment type="catalytic activity">
    <reaction evidence="1">
        <text>O-phospho-L-serine + 2-oxoglutarate = 3-phosphooxypyruvate + L-glutamate</text>
        <dbReference type="Rhea" id="RHEA:14329"/>
        <dbReference type="ChEBI" id="CHEBI:16810"/>
        <dbReference type="ChEBI" id="CHEBI:18110"/>
        <dbReference type="ChEBI" id="CHEBI:29985"/>
        <dbReference type="ChEBI" id="CHEBI:57524"/>
        <dbReference type="EC" id="2.6.1.52"/>
    </reaction>
</comment>
<comment type="catalytic activity">
    <reaction evidence="1">
        <text>4-(phosphooxy)-L-threonine + 2-oxoglutarate = (R)-3-hydroxy-2-oxo-4-phosphooxybutanoate + L-glutamate</text>
        <dbReference type="Rhea" id="RHEA:16573"/>
        <dbReference type="ChEBI" id="CHEBI:16810"/>
        <dbReference type="ChEBI" id="CHEBI:29985"/>
        <dbReference type="ChEBI" id="CHEBI:58452"/>
        <dbReference type="ChEBI" id="CHEBI:58538"/>
        <dbReference type="EC" id="2.6.1.52"/>
    </reaction>
</comment>
<comment type="cofactor">
    <cofactor evidence="1">
        <name>pyridoxal 5'-phosphate</name>
        <dbReference type="ChEBI" id="CHEBI:597326"/>
    </cofactor>
    <text evidence="1">Binds 1 pyridoxal phosphate per subunit.</text>
</comment>
<comment type="pathway">
    <text evidence="1">Amino-acid biosynthesis; L-serine biosynthesis; L-serine from 3-phospho-D-glycerate: step 2/3.</text>
</comment>
<comment type="pathway">
    <text evidence="1">Cofactor biosynthesis; pyridoxine 5'-phosphate biosynthesis; pyridoxine 5'-phosphate from D-erythrose 4-phosphate: step 3/5.</text>
</comment>
<comment type="subunit">
    <text evidence="1">Homodimer.</text>
</comment>
<comment type="subcellular location">
    <subcellularLocation>
        <location evidence="1">Cytoplasm</location>
    </subcellularLocation>
</comment>
<comment type="similarity">
    <text evidence="1">Belongs to the class-V pyridoxal-phosphate-dependent aminotransferase family. SerC subfamily.</text>
</comment>
<evidence type="ECO:0000255" key="1">
    <source>
        <dbReference type="HAMAP-Rule" id="MF_00160"/>
    </source>
</evidence>
<proteinExistence type="inferred from homology"/>
<keyword id="KW-0028">Amino-acid biosynthesis</keyword>
<keyword id="KW-0032">Aminotransferase</keyword>
<keyword id="KW-0963">Cytoplasm</keyword>
<keyword id="KW-0663">Pyridoxal phosphate</keyword>
<keyword id="KW-0664">Pyridoxine biosynthesis</keyword>
<keyword id="KW-0718">Serine biosynthesis</keyword>
<keyword id="KW-0808">Transferase</keyword>